<reference key="1">
    <citation type="journal article" date="2005" name="PLoS Genet.">
        <title>Life in hot carbon monoxide: the complete genome sequence of Carboxydothermus hydrogenoformans Z-2901.</title>
        <authorList>
            <person name="Wu M."/>
            <person name="Ren Q."/>
            <person name="Durkin A.S."/>
            <person name="Daugherty S.C."/>
            <person name="Brinkac L.M."/>
            <person name="Dodson R.J."/>
            <person name="Madupu R."/>
            <person name="Sullivan S.A."/>
            <person name="Kolonay J.F."/>
            <person name="Nelson W.C."/>
            <person name="Tallon L.J."/>
            <person name="Jones K.M."/>
            <person name="Ulrich L.E."/>
            <person name="Gonzalez J.M."/>
            <person name="Zhulin I.B."/>
            <person name="Robb F.T."/>
            <person name="Eisen J.A."/>
        </authorList>
    </citation>
    <scope>NUCLEOTIDE SEQUENCE [LARGE SCALE GENOMIC DNA]</scope>
    <source>
        <strain>ATCC BAA-161 / DSM 6008 / Z-2901</strain>
    </source>
</reference>
<name>KHSE_CARHZ</name>
<evidence type="ECO:0000255" key="1">
    <source>
        <dbReference type="HAMAP-Rule" id="MF_00384"/>
    </source>
</evidence>
<feature type="chain" id="PRO_1000049119" description="Homoserine kinase">
    <location>
        <begin position="1"/>
        <end position="304"/>
    </location>
</feature>
<feature type="binding site" evidence="1">
    <location>
        <begin position="86"/>
        <end position="96"/>
    </location>
    <ligand>
        <name>ATP</name>
        <dbReference type="ChEBI" id="CHEBI:30616"/>
    </ligand>
</feature>
<protein>
    <recommendedName>
        <fullName evidence="1">Homoserine kinase</fullName>
        <shortName evidence="1">HK</shortName>
        <shortName evidence="1">HSK</shortName>
        <ecNumber evidence="1">2.7.1.39</ecNumber>
    </recommendedName>
</protein>
<sequence>MVCVLIPATSANLGPGFDAVGMALSFYNEVSLGPSPKELEIEVFGDGAELISRDKNNLVYVAITKIFERLGKTPRNLKLTLKNRVPLARGLGSSAAAIVGGLVAANAYLGNPLPKDELLRLATELEGHPDNVAPALLGGVVVSGFDRDKVKYLKLPVPEVEVVVAIPKFQLKTADSRQILPAEIPFSQAVLNVNRVSFLIAAFCLKKYEYLQIGMEDYLHQPYRSQLIPGFYQVVEEAKKAGAYGVALSGSGPTVIALAREGKAVGRAIEETFLNFGVEAEIIYTRPEERGAIDLINYKGEGDC</sequence>
<keyword id="KW-0028">Amino-acid biosynthesis</keyword>
<keyword id="KW-0067">ATP-binding</keyword>
<keyword id="KW-0963">Cytoplasm</keyword>
<keyword id="KW-0418">Kinase</keyword>
<keyword id="KW-0547">Nucleotide-binding</keyword>
<keyword id="KW-1185">Reference proteome</keyword>
<keyword id="KW-0791">Threonine biosynthesis</keyword>
<keyword id="KW-0808">Transferase</keyword>
<proteinExistence type="inferred from homology"/>
<gene>
    <name evidence="1" type="primary">thrB</name>
    <name type="ordered locus">CHY_1910</name>
</gene>
<dbReference type="EC" id="2.7.1.39" evidence="1"/>
<dbReference type="EMBL" id="CP000141">
    <property type="protein sequence ID" value="ABB14267.1"/>
    <property type="molecule type" value="Genomic_DNA"/>
</dbReference>
<dbReference type="RefSeq" id="WP_011344802.1">
    <property type="nucleotide sequence ID" value="NC_007503.1"/>
</dbReference>
<dbReference type="SMR" id="Q3AAV5"/>
<dbReference type="FunCoup" id="Q3AAV5">
    <property type="interactions" value="306"/>
</dbReference>
<dbReference type="STRING" id="246194.CHY_1910"/>
<dbReference type="KEGG" id="chy:CHY_1910"/>
<dbReference type="eggNOG" id="COG0083">
    <property type="taxonomic scope" value="Bacteria"/>
</dbReference>
<dbReference type="HOGENOM" id="CLU_041243_0_2_9"/>
<dbReference type="InParanoid" id="Q3AAV5"/>
<dbReference type="OrthoDB" id="9769912at2"/>
<dbReference type="UniPathway" id="UPA00050">
    <property type="reaction ID" value="UER00064"/>
</dbReference>
<dbReference type="Proteomes" id="UP000002706">
    <property type="component" value="Chromosome"/>
</dbReference>
<dbReference type="GO" id="GO:0005737">
    <property type="term" value="C:cytoplasm"/>
    <property type="evidence" value="ECO:0007669"/>
    <property type="project" value="UniProtKB-SubCell"/>
</dbReference>
<dbReference type="GO" id="GO:0005524">
    <property type="term" value="F:ATP binding"/>
    <property type="evidence" value="ECO:0007669"/>
    <property type="project" value="UniProtKB-UniRule"/>
</dbReference>
<dbReference type="GO" id="GO:0004413">
    <property type="term" value="F:homoserine kinase activity"/>
    <property type="evidence" value="ECO:0007669"/>
    <property type="project" value="UniProtKB-UniRule"/>
</dbReference>
<dbReference type="GO" id="GO:0009088">
    <property type="term" value="P:threonine biosynthetic process"/>
    <property type="evidence" value="ECO:0007669"/>
    <property type="project" value="UniProtKB-UniRule"/>
</dbReference>
<dbReference type="Gene3D" id="3.30.230.10">
    <property type="match status" value="1"/>
</dbReference>
<dbReference type="Gene3D" id="3.30.70.890">
    <property type="entry name" value="GHMP kinase, C-terminal domain"/>
    <property type="match status" value="1"/>
</dbReference>
<dbReference type="HAMAP" id="MF_00384">
    <property type="entry name" value="Homoser_kinase"/>
    <property type="match status" value="1"/>
</dbReference>
<dbReference type="InterPro" id="IPR013750">
    <property type="entry name" value="GHMP_kinase_C_dom"/>
</dbReference>
<dbReference type="InterPro" id="IPR036554">
    <property type="entry name" value="GHMP_kinase_C_sf"/>
</dbReference>
<dbReference type="InterPro" id="IPR006204">
    <property type="entry name" value="GHMP_kinase_N_dom"/>
</dbReference>
<dbReference type="InterPro" id="IPR006203">
    <property type="entry name" value="GHMP_knse_ATP-bd_CS"/>
</dbReference>
<dbReference type="InterPro" id="IPR000870">
    <property type="entry name" value="Homoserine_kinase"/>
</dbReference>
<dbReference type="InterPro" id="IPR020568">
    <property type="entry name" value="Ribosomal_Su5_D2-typ_SF"/>
</dbReference>
<dbReference type="InterPro" id="IPR014721">
    <property type="entry name" value="Ribsml_uS5_D2-typ_fold_subgr"/>
</dbReference>
<dbReference type="NCBIfam" id="NF002288">
    <property type="entry name" value="PRK01212.1-4"/>
    <property type="match status" value="1"/>
</dbReference>
<dbReference type="NCBIfam" id="TIGR00191">
    <property type="entry name" value="thrB"/>
    <property type="match status" value="1"/>
</dbReference>
<dbReference type="PANTHER" id="PTHR20861:SF1">
    <property type="entry name" value="HOMOSERINE KINASE"/>
    <property type="match status" value="1"/>
</dbReference>
<dbReference type="PANTHER" id="PTHR20861">
    <property type="entry name" value="HOMOSERINE/4-DIPHOSPHOCYTIDYL-2-C-METHYL-D-ERYTHRITOL KINASE"/>
    <property type="match status" value="1"/>
</dbReference>
<dbReference type="Pfam" id="PF08544">
    <property type="entry name" value="GHMP_kinases_C"/>
    <property type="match status" value="1"/>
</dbReference>
<dbReference type="Pfam" id="PF00288">
    <property type="entry name" value="GHMP_kinases_N"/>
    <property type="match status" value="1"/>
</dbReference>
<dbReference type="PIRSF" id="PIRSF000676">
    <property type="entry name" value="Homoser_kin"/>
    <property type="match status" value="1"/>
</dbReference>
<dbReference type="PRINTS" id="PR00958">
    <property type="entry name" value="HOMSERKINASE"/>
</dbReference>
<dbReference type="SUPFAM" id="SSF55060">
    <property type="entry name" value="GHMP Kinase, C-terminal domain"/>
    <property type="match status" value="1"/>
</dbReference>
<dbReference type="SUPFAM" id="SSF54211">
    <property type="entry name" value="Ribosomal protein S5 domain 2-like"/>
    <property type="match status" value="1"/>
</dbReference>
<dbReference type="PROSITE" id="PS00627">
    <property type="entry name" value="GHMP_KINASES_ATP"/>
    <property type="match status" value="1"/>
</dbReference>
<accession>Q3AAV5</accession>
<comment type="function">
    <text evidence="1">Catalyzes the ATP-dependent phosphorylation of L-homoserine to L-homoserine phosphate.</text>
</comment>
<comment type="catalytic activity">
    <reaction evidence="1">
        <text>L-homoserine + ATP = O-phospho-L-homoserine + ADP + H(+)</text>
        <dbReference type="Rhea" id="RHEA:13985"/>
        <dbReference type="ChEBI" id="CHEBI:15378"/>
        <dbReference type="ChEBI" id="CHEBI:30616"/>
        <dbReference type="ChEBI" id="CHEBI:57476"/>
        <dbReference type="ChEBI" id="CHEBI:57590"/>
        <dbReference type="ChEBI" id="CHEBI:456216"/>
        <dbReference type="EC" id="2.7.1.39"/>
    </reaction>
</comment>
<comment type="pathway">
    <text evidence="1">Amino-acid biosynthesis; L-threonine biosynthesis; L-threonine from L-aspartate: step 4/5.</text>
</comment>
<comment type="subcellular location">
    <subcellularLocation>
        <location evidence="1">Cytoplasm</location>
    </subcellularLocation>
</comment>
<comment type="similarity">
    <text evidence="1">Belongs to the GHMP kinase family. Homoserine kinase subfamily.</text>
</comment>
<organism>
    <name type="scientific">Carboxydothermus hydrogenoformans (strain ATCC BAA-161 / DSM 6008 / Z-2901)</name>
    <dbReference type="NCBI Taxonomy" id="246194"/>
    <lineage>
        <taxon>Bacteria</taxon>
        <taxon>Bacillati</taxon>
        <taxon>Bacillota</taxon>
        <taxon>Clostridia</taxon>
        <taxon>Thermoanaerobacterales</taxon>
        <taxon>Thermoanaerobacteraceae</taxon>
        <taxon>Carboxydothermus</taxon>
    </lineage>
</organism>